<accession>C3LNM5</accession>
<keyword id="KW-0067">ATP-binding</keyword>
<keyword id="KW-0143">Chaperone</keyword>
<keyword id="KW-0479">Metal-binding</keyword>
<keyword id="KW-0547">Nucleotide-binding</keyword>
<keyword id="KW-0862">Zinc</keyword>
<gene>
    <name evidence="1" type="primary">clpX</name>
    <name type="ordered locus">VCM66_1845</name>
</gene>
<dbReference type="EMBL" id="CP001233">
    <property type="protein sequence ID" value="ACP06151.1"/>
    <property type="molecule type" value="Genomic_DNA"/>
</dbReference>
<dbReference type="RefSeq" id="WP_000130332.1">
    <property type="nucleotide sequence ID" value="NC_012578.1"/>
</dbReference>
<dbReference type="SMR" id="C3LNM5"/>
<dbReference type="GeneID" id="94013424"/>
<dbReference type="KEGG" id="vcm:VCM66_1845"/>
<dbReference type="HOGENOM" id="CLU_014218_8_2_6"/>
<dbReference type="Proteomes" id="UP000001217">
    <property type="component" value="Chromosome I"/>
</dbReference>
<dbReference type="GO" id="GO:0009376">
    <property type="term" value="C:HslUV protease complex"/>
    <property type="evidence" value="ECO:0007669"/>
    <property type="project" value="TreeGrafter"/>
</dbReference>
<dbReference type="GO" id="GO:0005524">
    <property type="term" value="F:ATP binding"/>
    <property type="evidence" value="ECO:0007669"/>
    <property type="project" value="UniProtKB-UniRule"/>
</dbReference>
<dbReference type="GO" id="GO:0016887">
    <property type="term" value="F:ATP hydrolysis activity"/>
    <property type="evidence" value="ECO:0007669"/>
    <property type="project" value="InterPro"/>
</dbReference>
<dbReference type="GO" id="GO:0140662">
    <property type="term" value="F:ATP-dependent protein folding chaperone"/>
    <property type="evidence" value="ECO:0007669"/>
    <property type="project" value="InterPro"/>
</dbReference>
<dbReference type="GO" id="GO:0046983">
    <property type="term" value="F:protein dimerization activity"/>
    <property type="evidence" value="ECO:0007669"/>
    <property type="project" value="InterPro"/>
</dbReference>
<dbReference type="GO" id="GO:0051082">
    <property type="term" value="F:unfolded protein binding"/>
    <property type="evidence" value="ECO:0007669"/>
    <property type="project" value="UniProtKB-UniRule"/>
</dbReference>
<dbReference type="GO" id="GO:0008270">
    <property type="term" value="F:zinc ion binding"/>
    <property type="evidence" value="ECO:0007669"/>
    <property type="project" value="InterPro"/>
</dbReference>
<dbReference type="GO" id="GO:0051301">
    <property type="term" value="P:cell division"/>
    <property type="evidence" value="ECO:0007669"/>
    <property type="project" value="TreeGrafter"/>
</dbReference>
<dbReference type="GO" id="GO:0051603">
    <property type="term" value="P:proteolysis involved in protein catabolic process"/>
    <property type="evidence" value="ECO:0007669"/>
    <property type="project" value="TreeGrafter"/>
</dbReference>
<dbReference type="CDD" id="cd19497">
    <property type="entry name" value="RecA-like_ClpX"/>
    <property type="match status" value="1"/>
</dbReference>
<dbReference type="FunFam" id="1.10.8.60:FF:000002">
    <property type="entry name" value="ATP-dependent Clp protease ATP-binding subunit ClpX"/>
    <property type="match status" value="1"/>
</dbReference>
<dbReference type="FunFam" id="3.40.50.300:FF:000005">
    <property type="entry name" value="ATP-dependent Clp protease ATP-binding subunit ClpX"/>
    <property type="match status" value="1"/>
</dbReference>
<dbReference type="Gene3D" id="1.10.8.60">
    <property type="match status" value="1"/>
</dbReference>
<dbReference type="Gene3D" id="6.20.220.10">
    <property type="entry name" value="ClpX chaperone, C4-type zinc finger domain"/>
    <property type="match status" value="1"/>
</dbReference>
<dbReference type="Gene3D" id="3.40.50.300">
    <property type="entry name" value="P-loop containing nucleotide triphosphate hydrolases"/>
    <property type="match status" value="1"/>
</dbReference>
<dbReference type="HAMAP" id="MF_00175">
    <property type="entry name" value="ClpX"/>
    <property type="match status" value="1"/>
</dbReference>
<dbReference type="InterPro" id="IPR003593">
    <property type="entry name" value="AAA+_ATPase"/>
</dbReference>
<dbReference type="InterPro" id="IPR050052">
    <property type="entry name" value="ATP-dep_Clp_protease_ClpX"/>
</dbReference>
<dbReference type="InterPro" id="IPR003959">
    <property type="entry name" value="ATPase_AAA_core"/>
</dbReference>
<dbReference type="InterPro" id="IPR019489">
    <property type="entry name" value="Clp_ATPase_C"/>
</dbReference>
<dbReference type="InterPro" id="IPR004487">
    <property type="entry name" value="Clp_protease_ATP-bd_su_ClpX"/>
</dbReference>
<dbReference type="InterPro" id="IPR046425">
    <property type="entry name" value="ClpX_bact"/>
</dbReference>
<dbReference type="InterPro" id="IPR027417">
    <property type="entry name" value="P-loop_NTPase"/>
</dbReference>
<dbReference type="InterPro" id="IPR010603">
    <property type="entry name" value="Znf_CppX_C4"/>
</dbReference>
<dbReference type="InterPro" id="IPR038366">
    <property type="entry name" value="Znf_CppX_C4_sf"/>
</dbReference>
<dbReference type="NCBIfam" id="TIGR00382">
    <property type="entry name" value="clpX"/>
    <property type="match status" value="1"/>
</dbReference>
<dbReference type="NCBIfam" id="NF003745">
    <property type="entry name" value="PRK05342.1"/>
    <property type="match status" value="1"/>
</dbReference>
<dbReference type="PANTHER" id="PTHR48102:SF7">
    <property type="entry name" value="ATP-DEPENDENT CLP PROTEASE ATP-BINDING SUBUNIT CLPX-LIKE, MITOCHONDRIAL"/>
    <property type="match status" value="1"/>
</dbReference>
<dbReference type="PANTHER" id="PTHR48102">
    <property type="entry name" value="ATP-DEPENDENT CLP PROTEASE ATP-BINDING SUBUNIT CLPX-LIKE, MITOCHONDRIAL-RELATED"/>
    <property type="match status" value="1"/>
</dbReference>
<dbReference type="Pfam" id="PF07724">
    <property type="entry name" value="AAA_2"/>
    <property type="match status" value="1"/>
</dbReference>
<dbReference type="Pfam" id="PF10431">
    <property type="entry name" value="ClpB_D2-small"/>
    <property type="match status" value="1"/>
</dbReference>
<dbReference type="Pfam" id="PF06689">
    <property type="entry name" value="zf-C4_ClpX"/>
    <property type="match status" value="1"/>
</dbReference>
<dbReference type="SMART" id="SM00382">
    <property type="entry name" value="AAA"/>
    <property type="match status" value="1"/>
</dbReference>
<dbReference type="SMART" id="SM01086">
    <property type="entry name" value="ClpB_D2-small"/>
    <property type="match status" value="1"/>
</dbReference>
<dbReference type="SMART" id="SM00994">
    <property type="entry name" value="zf-C4_ClpX"/>
    <property type="match status" value="1"/>
</dbReference>
<dbReference type="SUPFAM" id="SSF57716">
    <property type="entry name" value="Glucocorticoid receptor-like (DNA-binding domain)"/>
    <property type="match status" value="1"/>
</dbReference>
<dbReference type="SUPFAM" id="SSF52540">
    <property type="entry name" value="P-loop containing nucleoside triphosphate hydrolases"/>
    <property type="match status" value="1"/>
</dbReference>
<dbReference type="PROSITE" id="PS51902">
    <property type="entry name" value="CLPX_ZB"/>
    <property type="match status" value="1"/>
</dbReference>
<reference key="1">
    <citation type="journal article" date="2008" name="PLoS ONE">
        <title>A recalibrated molecular clock and independent origins for the cholera pandemic clones.</title>
        <authorList>
            <person name="Feng L."/>
            <person name="Reeves P.R."/>
            <person name="Lan R."/>
            <person name="Ren Y."/>
            <person name="Gao C."/>
            <person name="Zhou Z."/>
            <person name="Ren Y."/>
            <person name="Cheng J."/>
            <person name="Wang W."/>
            <person name="Wang J."/>
            <person name="Qian W."/>
            <person name="Li D."/>
            <person name="Wang L."/>
        </authorList>
    </citation>
    <scope>NUCLEOTIDE SEQUENCE [LARGE SCALE GENOMIC DNA]</scope>
    <source>
        <strain>M66-2</strain>
    </source>
</reference>
<name>CLPX_VIBCM</name>
<protein>
    <recommendedName>
        <fullName evidence="1">ATP-dependent Clp protease ATP-binding subunit ClpX</fullName>
    </recommendedName>
</protein>
<organism>
    <name type="scientific">Vibrio cholerae serotype O1 (strain M66-2)</name>
    <dbReference type="NCBI Taxonomy" id="579112"/>
    <lineage>
        <taxon>Bacteria</taxon>
        <taxon>Pseudomonadati</taxon>
        <taxon>Pseudomonadota</taxon>
        <taxon>Gammaproteobacteria</taxon>
        <taxon>Vibrionales</taxon>
        <taxon>Vibrionaceae</taxon>
        <taxon>Vibrio</taxon>
    </lineage>
</organism>
<evidence type="ECO:0000255" key="1">
    <source>
        <dbReference type="HAMAP-Rule" id="MF_00175"/>
    </source>
</evidence>
<evidence type="ECO:0000255" key="2">
    <source>
        <dbReference type="PROSITE-ProRule" id="PRU01250"/>
    </source>
</evidence>
<feature type="chain" id="PRO_1000123859" description="ATP-dependent Clp protease ATP-binding subunit ClpX">
    <location>
        <begin position="1"/>
        <end position="426"/>
    </location>
</feature>
<feature type="domain" description="ClpX-type ZB" evidence="2">
    <location>
        <begin position="4"/>
        <end position="57"/>
    </location>
</feature>
<feature type="binding site" evidence="2">
    <location>
        <position position="16"/>
    </location>
    <ligand>
        <name>Zn(2+)</name>
        <dbReference type="ChEBI" id="CHEBI:29105"/>
    </ligand>
</feature>
<feature type="binding site" evidence="2">
    <location>
        <position position="19"/>
    </location>
    <ligand>
        <name>Zn(2+)</name>
        <dbReference type="ChEBI" id="CHEBI:29105"/>
    </ligand>
</feature>
<feature type="binding site" evidence="2">
    <location>
        <position position="38"/>
    </location>
    <ligand>
        <name>Zn(2+)</name>
        <dbReference type="ChEBI" id="CHEBI:29105"/>
    </ligand>
</feature>
<feature type="binding site" evidence="2">
    <location>
        <position position="41"/>
    </location>
    <ligand>
        <name>Zn(2+)</name>
        <dbReference type="ChEBI" id="CHEBI:29105"/>
    </ligand>
</feature>
<feature type="binding site" evidence="1">
    <location>
        <begin position="122"/>
        <end position="129"/>
    </location>
    <ligand>
        <name>ATP</name>
        <dbReference type="ChEBI" id="CHEBI:30616"/>
    </ligand>
</feature>
<proteinExistence type="inferred from homology"/>
<comment type="function">
    <text evidence="1">ATP-dependent specificity component of the Clp protease. It directs the protease to specific substrates. Can perform chaperone functions in the absence of ClpP.</text>
</comment>
<comment type="subunit">
    <text evidence="1">Component of the ClpX-ClpP complex. Forms a hexameric ring that, in the presence of ATP, binds to fourteen ClpP subunits assembled into a disk-like structure with a central cavity, resembling the structure of eukaryotic proteasomes.</text>
</comment>
<comment type="similarity">
    <text evidence="1">Belongs to the ClpX chaperone family.</text>
</comment>
<sequence>MTDKSKEGGSSKLLYCSFCGKSQHEVRKLIAGPSVYICDECVDLCNDIIREEIKDVLPKKESAALPTPRKIREHLDDYVIGQEHAKKVLAVAVYNHYKRLRNGDTTSEGVELGKSNILLIGPTGSGKTLLAETLARLLDVPFTMADATTLTEAGYVGEDVENIIQKLLQKCDYDVAKAERGIVYIDEIDKISRKSENPSITRDVSGEGVQQALLKLIEGTVASVPPQGGRKHPQQEFLQVDTSKILFICGGAFAGLDKVIEQRVATGTGIGFGADVRSKDNSKTLSELFTQVEPEDLVKYGLIPEFIGRLPVTATLTELDEAALIQILCEPKNALTKQYAALFELENVDLEFREDALKAIAAKAMKRKTGARGLRSILEAVLLETMYELPSMEEVSKVVIDESVINGESAPLLIYSANESQAAGAE</sequence>